<proteinExistence type="evidence at protein level"/>
<feature type="chain" id="PRO_0000181319" description="Prolactin">
    <location>
        <begin position="1"/>
        <end position="199"/>
    </location>
</feature>
<feature type="modified residue" description="Phosphoserine" evidence="3">
    <location>
        <position position="26"/>
    </location>
</feature>
<feature type="modified residue" description="Phosphoserine" evidence="3">
    <location>
        <position position="34"/>
    </location>
</feature>
<feature type="modified residue" description="Phosphoserine" evidence="3">
    <location>
        <position position="90"/>
    </location>
</feature>
<feature type="disulfide bond" evidence="1">
    <location>
        <begin position="4"/>
        <end position="11"/>
    </location>
</feature>
<feature type="disulfide bond" evidence="1">
    <location>
        <begin position="58"/>
        <end position="174"/>
    </location>
</feature>
<feature type="disulfide bond" evidence="1">
    <location>
        <begin position="191"/>
        <end position="199"/>
    </location>
</feature>
<sequence>IPVCPRGSVRCQVSLPDLFDRAVMLSHYIHSLSSDMFHEFNKQYALGRGFIPRAINSCHTSSISTPEDKDQAQQTHHEVLMDLILGLLRSWNDPLDHLASEVHSLPKAPSALLTKATEVKEENQRLLEGIEKIVDQVHPGAKENKAYSVWSGLPSLQTTDEDARLFAFYNLFRCLRRDSHKIDSYLKLLKCRIVYNNNC</sequence>
<keyword id="KW-0903">Direct protein sequencing</keyword>
<keyword id="KW-1015">Disulfide bond</keyword>
<keyword id="KW-0372">Hormone</keyword>
<keyword id="KW-0421">Lactation</keyword>
<keyword id="KW-0597">Phosphoprotein</keyword>
<keyword id="KW-1185">Reference proteome</keyword>
<keyword id="KW-0964">Secreted</keyword>
<dbReference type="SMR" id="P10765"/>
<dbReference type="FunCoup" id="P10765">
    <property type="interactions" value="11"/>
</dbReference>
<dbReference type="STRING" id="9785.ENSLAFP00000016822"/>
<dbReference type="eggNOG" id="ENOG502QYU3">
    <property type="taxonomic scope" value="Eukaryota"/>
</dbReference>
<dbReference type="InParanoid" id="P10765"/>
<dbReference type="Proteomes" id="UP000007646">
    <property type="component" value="Unassembled WGS sequence"/>
</dbReference>
<dbReference type="GO" id="GO:0005615">
    <property type="term" value="C:extracellular space"/>
    <property type="evidence" value="ECO:0007669"/>
    <property type="project" value="TreeGrafter"/>
</dbReference>
<dbReference type="GO" id="GO:0005179">
    <property type="term" value="F:hormone activity"/>
    <property type="evidence" value="ECO:0007669"/>
    <property type="project" value="UniProtKB-KW"/>
</dbReference>
<dbReference type="GO" id="GO:0005148">
    <property type="term" value="F:prolactin receptor binding"/>
    <property type="evidence" value="ECO:0007669"/>
    <property type="project" value="TreeGrafter"/>
</dbReference>
<dbReference type="GO" id="GO:0007565">
    <property type="term" value="P:female pregnancy"/>
    <property type="evidence" value="ECO:0007669"/>
    <property type="project" value="TreeGrafter"/>
</dbReference>
<dbReference type="GO" id="GO:0007595">
    <property type="term" value="P:lactation"/>
    <property type="evidence" value="ECO:0007669"/>
    <property type="project" value="UniProtKB-KW"/>
</dbReference>
<dbReference type="GO" id="GO:0008284">
    <property type="term" value="P:positive regulation of cell population proliferation"/>
    <property type="evidence" value="ECO:0007669"/>
    <property type="project" value="TreeGrafter"/>
</dbReference>
<dbReference type="GO" id="GO:1903489">
    <property type="term" value="P:positive regulation of lactation"/>
    <property type="evidence" value="ECO:0007669"/>
    <property type="project" value="TreeGrafter"/>
</dbReference>
<dbReference type="GO" id="GO:0046427">
    <property type="term" value="P:positive regulation of receptor signaling pathway via JAK-STAT"/>
    <property type="evidence" value="ECO:0007669"/>
    <property type="project" value="TreeGrafter"/>
</dbReference>
<dbReference type="GO" id="GO:0031667">
    <property type="term" value="P:response to nutrient levels"/>
    <property type="evidence" value="ECO:0007669"/>
    <property type="project" value="TreeGrafter"/>
</dbReference>
<dbReference type="CDD" id="cd10288">
    <property type="entry name" value="prolactin_like"/>
    <property type="match status" value="1"/>
</dbReference>
<dbReference type="FunFam" id="1.20.1250.10:FF:000003">
    <property type="entry name" value="Prolactin"/>
    <property type="match status" value="1"/>
</dbReference>
<dbReference type="Gene3D" id="1.20.1250.10">
    <property type="match status" value="1"/>
</dbReference>
<dbReference type="InterPro" id="IPR009079">
    <property type="entry name" value="4_helix_cytokine-like_core"/>
</dbReference>
<dbReference type="InterPro" id="IPR001400">
    <property type="entry name" value="Somatotropin/Prolactin"/>
</dbReference>
<dbReference type="InterPro" id="IPR018116">
    <property type="entry name" value="Somatotropin_CS"/>
</dbReference>
<dbReference type="PANTHER" id="PTHR11417:SF5">
    <property type="entry name" value="PROLACTIN"/>
    <property type="match status" value="1"/>
</dbReference>
<dbReference type="PANTHER" id="PTHR11417">
    <property type="entry name" value="SOMATOTROPIN,PROLACTIN"/>
    <property type="match status" value="1"/>
</dbReference>
<dbReference type="Pfam" id="PF00103">
    <property type="entry name" value="Hormone_1"/>
    <property type="match status" value="1"/>
</dbReference>
<dbReference type="PRINTS" id="PR00836">
    <property type="entry name" value="SOMATOTROPIN"/>
</dbReference>
<dbReference type="SUPFAM" id="SSF47266">
    <property type="entry name" value="4-helical cytokines"/>
    <property type="match status" value="1"/>
</dbReference>
<dbReference type="PROSITE" id="PS00266">
    <property type="entry name" value="SOMATOTROPIN_1"/>
    <property type="match status" value="1"/>
</dbReference>
<dbReference type="PROSITE" id="PS00338">
    <property type="entry name" value="SOMATOTROPIN_2"/>
    <property type="match status" value="1"/>
</dbReference>
<gene>
    <name type="primary">PRL</name>
</gene>
<evidence type="ECO:0000250" key="1"/>
<evidence type="ECO:0000250" key="2">
    <source>
        <dbReference type="UniProtKB" id="P01236"/>
    </source>
</evidence>
<evidence type="ECO:0000250" key="3">
    <source>
        <dbReference type="UniProtKB" id="P01239"/>
    </source>
</evidence>
<evidence type="ECO:0000305" key="4"/>
<reference key="1">
    <citation type="journal article" date="1989" name="Int. J. Pept. Protein Res.">
        <title>Primary structure of elephant pituitary prolactin.</title>
        <authorList>
            <person name="Li C.H."/>
            <person name="Oosthuizen M.M.J."/>
            <person name="Chung D."/>
        </authorList>
    </citation>
    <scope>PROTEIN SEQUENCE</scope>
    <source>
        <tissue>Pituitary</tissue>
    </source>
</reference>
<accession>P10765</accession>
<organism>
    <name type="scientific">Loxodonta africana</name>
    <name type="common">African elephant</name>
    <dbReference type="NCBI Taxonomy" id="9785"/>
    <lineage>
        <taxon>Eukaryota</taxon>
        <taxon>Metazoa</taxon>
        <taxon>Chordata</taxon>
        <taxon>Craniata</taxon>
        <taxon>Vertebrata</taxon>
        <taxon>Euteleostomi</taxon>
        <taxon>Mammalia</taxon>
        <taxon>Eutheria</taxon>
        <taxon>Afrotheria</taxon>
        <taxon>Proboscidea</taxon>
        <taxon>Elephantidae</taxon>
        <taxon>Loxodonta</taxon>
    </lineage>
</organism>
<name>PRL_LOXAF</name>
<comment type="function">
    <text>Prolactin acts primarily on the mammary gland by promoting lactation.</text>
</comment>
<comment type="subunit">
    <text evidence="2">Interacts with PRLR.</text>
</comment>
<comment type="subcellular location">
    <subcellularLocation>
        <location>Secreted</location>
    </subcellularLocation>
</comment>
<comment type="similarity">
    <text evidence="4">Belongs to the somatotropin/prolactin family.</text>
</comment>
<protein>
    <recommendedName>
        <fullName>Prolactin</fullName>
        <shortName>PRL</shortName>
    </recommendedName>
</protein>